<keyword id="KW-0963">Cytoplasm</keyword>
<keyword id="KW-0441">Lipid A biosynthesis</keyword>
<keyword id="KW-0444">Lipid biosynthesis</keyword>
<keyword id="KW-0443">Lipid metabolism</keyword>
<keyword id="KW-0456">Lyase</keyword>
<proteinExistence type="inferred from homology"/>
<organism>
    <name type="scientific">Variovorax paradoxus (strain S110)</name>
    <dbReference type="NCBI Taxonomy" id="543728"/>
    <lineage>
        <taxon>Bacteria</taxon>
        <taxon>Pseudomonadati</taxon>
        <taxon>Pseudomonadota</taxon>
        <taxon>Betaproteobacteria</taxon>
        <taxon>Burkholderiales</taxon>
        <taxon>Comamonadaceae</taxon>
        <taxon>Variovorax</taxon>
    </lineage>
</organism>
<reference key="1">
    <citation type="journal article" date="2011" name="J. Bacteriol.">
        <title>Complete genome sequence of the metabolically versatile plant growth-promoting endophyte, Variovorax paradoxus S110.</title>
        <authorList>
            <person name="Han J.I."/>
            <person name="Choi H.K."/>
            <person name="Lee S.W."/>
            <person name="Orwin P.M."/>
            <person name="Kim J."/>
            <person name="Laroe S.L."/>
            <person name="Kim T.G."/>
            <person name="O'Neil J."/>
            <person name="Leadbetter J.R."/>
            <person name="Lee S.Y."/>
            <person name="Hur C.G."/>
            <person name="Spain J.C."/>
            <person name="Ovchinnikova G."/>
            <person name="Goodwin L."/>
            <person name="Han C."/>
        </authorList>
    </citation>
    <scope>NUCLEOTIDE SEQUENCE [LARGE SCALE GENOMIC DNA]</scope>
    <source>
        <strain>S110</strain>
    </source>
</reference>
<name>FABZ_VARPS</name>
<dbReference type="EC" id="4.2.1.59" evidence="1"/>
<dbReference type="EMBL" id="CP001635">
    <property type="protein sequence ID" value="ACS19235.1"/>
    <property type="molecule type" value="Genomic_DNA"/>
</dbReference>
<dbReference type="SMR" id="C5CKT1"/>
<dbReference type="STRING" id="543728.Vapar_2610"/>
<dbReference type="KEGG" id="vap:Vapar_2610"/>
<dbReference type="eggNOG" id="COG0764">
    <property type="taxonomic scope" value="Bacteria"/>
</dbReference>
<dbReference type="HOGENOM" id="CLU_078912_1_0_4"/>
<dbReference type="OrthoDB" id="9772788at2"/>
<dbReference type="GO" id="GO:0005737">
    <property type="term" value="C:cytoplasm"/>
    <property type="evidence" value="ECO:0007669"/>
    <property type="project" value="UniProtKB-SubCell"/>
</dbReference>
<dbReference type="GO" id="GO:0016020">
    <property type="term" value="C:membrane"/>
    <property type="evidence" value="ECO:0007669"/>
    <property type="project" value="GOC"/>
</dbReference>
<dbReference type="GO" id="GO:0019171">
    <property type="term" value="F:(3R)-hydroxyacyl-[acyl-carrier-protein] dehydratase activity"/>
    <property type="evidence" value="ECO:0007669"/>
    <property type="project" value="UniProtKB-EC"/>
</dbReference>
<dbReference type="GO" id="GO:0006633">
    <property type="term" value="P:fatty acid biosynthetic process"/>
    <property type="evidence" value="ECO:0007669"/>
    <property type="project" value="UniProtKB-UniRule"/>
</dbReference>
<dbReference type="GO" id="GO:0009245">
    <property type="term" value="P:lipid A biosynthetic process"/>
    <property type="evidence" value="ECO:0007669"/>
    <property type="project" value="UniProtKB-UniRule"/>
</dbReference>
<dbReference type="CDD" id="cd01288">
    <property type="entry name" value="FabZ"/>
    <property type="match status" value="1"/>
</dbReference>
<dbReference type="FunFam" id="3.10.129.10:FF:000001">
    <property type="entry name" value="3-hydroxyacyl-[acyl-carrier-protein] dehydratase FabZ"/>
    <property type="match status" value="1"/>
</dbReference>
<dbReference type="Gene3D" id="3.10.129.10">
    <property type="entry name" value="Hotdog Thioesterase"/>
    <property type="match status" value="1"/>
</dbReference>
<dbReference type="HAMAP" id="MF_00406">
    <property type="entry name" value="FabZ"/>
    <property type="match status" value="1"/>
</dbReference>
<dbReference type="InterPro" id="IPR013114">
    <property type="entry name" value="FabA_FabZ"/>
</dbReference>
<dbReference type="InterPro" id="IPR010084">
    <property type="entry name" value="FabZ"/>
</dbReference>
<dbReference type="InterPro" id="IPR029069">
    <property type="entry name" value="HotDog_dom_sf"/>
</dbReference>
<dbReference type="NCBIfam" id="TIGR01750">
    <property type="entry name" value="fabZ"/>
    <property type="match status" value="1"/>
</dbReference>
<dbReference type="NCBIfam" id="NF000582">
    <property type="entry name" value="PRK00006.1"/>
    <property type="match status" value="1"/>
</dbReference>
<dbReference type="PANTHER" id="PTHR30272">
    <property type="entry name" value="3-HYDROXYACYL-[ACYL-CARRIER-PROTEIN] DEHYDRATASE"/>
    <property type="match status" value="1"/>
</dbReference>
<dbReference type="PANTHER" id="PTHR30272:SF1">
    <property type="entry name" value="3-HYDROXYACYL-[ACYL-CARRIER-PROTEIN] DEHYDRATASE"/>
    <property type="match status" value="1"/>
</dbReference>
<dbReference type="Pfam" id="PF07977">
    <property type="entry name" value="FabA"/>
    <property type="match status" value="1"/>
</dbReference>
<dbReference type="SUPFAM" id="SSF54637">
    <property type="entry name" value="Thioesterase/thiol ester dehydrase-isomerase"/>
    <property type="match status" value="1"/>
</dbReference>
<sequence length="150" mass="16872">MTTTTLDIHQILKLLPHRYPFLLVDRVLDMEKGKRITALKNVTMNEPFFNGHFPHRPVMPGVLMLEAMAQAAALLSFHSLDIVPDDNTVYYFAAIDGARFKRPVEPGDQLTLEVEIERMKAGISKFKGRALVGSELACEATLMCAMRQIN</sequence>
<comment type="function">
    <text evidence="1">Involved in unsaturated fatty acids biosynthesis. Catalyzes the dehydration of short chain beta-hydroxyacyl-ACPs and long chain saturated and unsaturated beta-hydroxyacyl-ACPs.</text>
</comment>
<comment type="catalytic activity">
    <reaction evidence="1">
        <text>a (3R)-hydroxyacyl-[ACP] = a (2E)-enoyl-[ACP] + H2O</text>
        <dbReference type="Rhea" id="RHEA:13097"/>
        <dbReference type="Rhea" id="RHEA-COMP:9925"/>
        <dbReference type="Rhea" id="RHEA-COMP:9945"/>
        <dbReference type="ChEBI" id="CHEBI:15377"/>
        <dbReference type="ChEBI" id="CHEBI:78784"/>
        <dbReference type="ChEBI" id="CHEBI:78827"/>
        <dbReference type="EC" id="4.2.1.59"/>
    </reaction>
</comment>
<comment type="subcellular location">
    <subcellularLocation>
        <location evidence="1">Cytoplasm</location>
    </subcellularLocation>
</comment>
<comment type="similarity">
    <text evidence="1">Belongs to the thioester dehydratase family. FabZ subfamily.</text>
</comment>
<evidence type="ECO:0000255" key="1">
    <source>
        <dbReference type="HAMAP-Rule" id="MF_00406"/>
    </source>
</evidence>
<accession>C5CKT1</accession>
<gene>
    <name evidence="1" type="primary">fabZ</name>
    <name type="ordered locus">Vapar_2610</name>
</gene>
<protein>
    <recommendedName>
        <fullName evidence="1">3-hydroxyacyl-[acyl-carrier-protein] dehydratase FabZ</fullName>
        <ecNumber evidence="1">4.2.1.59</ecNumber>
    </recommendedName>
    <alternativeName>
        <fullName evidence="1">(3R)-hydroxymyristoyl-[acyl-carrier-protein] dehydratase</fullName>
        <shortName evidence="1">(3R)-hydroxymyristoyl-ACP dehydrase</shortName>
    </alternativeName>
    <alternativeName>
        <fullName evidence="1">Beta-hydroxyacyl-ACP dehydratase</fullName>
    </alternativeName>
</protein>
<feature type="chain" id="PRO_1000205953" description="3-hydroxyacyl-[acyl-carrier-protein] dehydratase FabZ">
    <location>
        <begin position="1"/>
        <end position="150"/>
    </location>
</feature>
<feature type="active site" evidence="1">
    <location>
        <position position="52"/>
    </location>
</feature>